<keyword id="KW-0067">ATP-binding</keyword>
<keyword id="KW-0963">Cytoplasm</keyword>
<keyword id="KW-0347">Helicase</keyword>
<keyword id="KW-0378">Hydrolase</keyword>
<keyword id="KW-0396">Initiation factor</keyword>
<keyword id="KW-0547">Nucleotide-binding</keyword>
<keyword id="KW-0648">Protein biosynthesis</keyword>
<keyword id="KW-1185">Reference proteome</keyword>
<keyword id="KW-0694">RNA-binding</keyword>
<comment type="function">
    <text evidence="1">ATP-dependent RNA helicase which is a subunit of the eIF4F complex involved in cap recognition and is required for mRNA binding to ribosome. In the current model of translation initiation, eIF4A unwinds RNA secondary structures in the 5'-UTR of mRNAs which is necessary to allow efficient binding of the small ribosomal subunit, and subsequent scanning for the initiator codon (By similarity).</text>
</comment>
<comment type="catalytic activity">
    <reaction>
        <text>ATP + H2O = ADP + phosphate + H(+)</text>
        <dbReference type="Rhea" id="RHEA:13065"/>
        <dbReference type="ChEBI" id="CHEBI:15377"/>
        <dbReference type="ChEBI" id="CHEBI:15378"/>
        <dbReference type="ChEBI" id="CHEBI:30616"/>
        <dbReference type="ChEBI" id="CHEBI:43474"/>
        <dbReference type="ChEBI" id="CHEBI:456216"/>
        <dbReference type="EC" id="3.6.4.13"/>
    </reaction>
</comment>
<comment type="subunit">
    <text evidence="1">Component of the eIF4F complex, which composition varies with external and internal environmental conditions. It is composed of at least eIF4A, eIF4E and eIF4G (By similarity).</text>
</comment>
<comment type="subcellular location">
    <subcellularLocation>
        <location evidence="1">Cytoplasm</location>
    </subcellularLocation>
</comment>
<comment type="domain">
    <text>The Q motif is unique to and characteristic of the DEAD box family of RNA helicases and controls ATP binding and hydrolysis.</text>
</comment>
<comment type="similarity">
    <text evidence="4">Belongs to the DEAD box helicase family. eIF4A subfamily.</text>
</comment>
<proteinExistence type="inferred from homology"/>
<feature type="chain" id="PRO_0000281682" description="ATP-dependent RNA helicase eIF4A">
    <location>
        <begin position="1"/>
        <end position="398"/>
    </location>
</feature>
<feature type="domain" description="Helicase ATP-binding" evidence="2">
    <location>
        <begin position="56"/>
        <end position="226"/>
    </location>
</feature>
<feature type="domain" description="Helicase C-terminal" evidence="3">
    <location>
        <begin position="237"/>
        <end position="398"/>
    </location>
</feature>
<feature type="short sequence motif" description="Q motif">
    <location>
        <begin position="25"/>
        <end position="53"/>
    </location>
</feature>
<feature type="short sequence motif" description="DEAD box">
    <location>
        <begin position="174"/>
        <end position="177"/>
    </location>
</feature>
<feature type="binding site" evidence="2">
    <location>
        <begin position="69"/>
        <end position="76"/>
    </location>
    <ligand>
        <name>ATP</name>
        <dbReference type="ChEBI" id="CHEBI:30616"/>
    </ligand>
</feature>
<organism>
    <name type="scientific">Aspergillus clavatus (strain ATCC 1007 / CBS 513.65 / DSM 816 / NCTC 3887 / NRRL 1 / QM 1276 / 107)</name>
    <dbReference type="NCBI Taxonomy" id="344612"/>
    <lineage>
        <taxon>Eukaryota</taxon>
        <taxon>Fungi</taxon>
        <taxon>Dikarya</taxon>
        <taxon>Ascomycota</taxon>
        <taxon>Pezizomycotina</taxon>
        <taxon>Eurotiomycetes</taxon>
        <taxon>Eurotiomycetidae</taxon>
        <taxon>Eurotiales</taxon>
        <taxon>Aspergillaceae</taxon>
        <taxon>Aspergillus</taxon>
        <taxon>Aspergillus subgen. Fumigati</taxon>
    </lineage>
</organism>
<sequence length="398" mass="44932">MASNDKGLEEIPEGQIESNYDEITDSFDSMDLKPELLRGIYAYGFERPSAIQQRAIMPIIKGSDVIAQAQSGTGKTATFSISALQKIDPNLKACQALILAPTRELAQQIQKVVVAIGDFMSLECHACIGGTNVREDMKALQDGPQVVVGTPGRVQDMIQRRVLRTDQMKLFILDEADEMLSRGFTEQIYDIFQLLPQSTQVVLLSATMPQDVLEVTTKFMRDPVRILVKKQELTLEGIKQFYIAVEKEEWKLDTLSDLYETVTITQAVIFCNTRRKVDWLTDKLTARDFTVSAMHGDMEQSQRDVIMKEFRSGSSRVLIATDLLARGIDVQQVSLVINYDLPANRENYIHRIGRGGRFGRKGVAINFVTADDVRMMREIEQFYSTQIEEMPMNVADLI</sequence>
<evidence type="ECO:0000250" key="1"/>
<evidence type="ECO:0000255" key="2">
    <source>
        <dbReference type="PROSITE-ProRule" id="PRU00541"/>
    </source>
</evidence>
<evidence type="ECO:0000255" key="3">
    <source>
        <dbReference type="PROSITE-ProRule" id="PRU00542"/>
    </source>
</evidence>
<evidence type="ECO:0000305" key="4"/>
<protein>
    <recommendedName>
        <fullName>ATP-dependent RNA helicase eIF4A</fullName>
        <ecNumber>3.6.4.13</ecNumber>
    </recommendedName>
    <alternativeName>
        <fullName>Eukaryotic initiation factor 4A</fullName>
        <shortName>eIF-4A</shortName>
    </alternativeName>
    <alternativeName>
        <fullName>Translation initiation factor 1</fullName>
    </alternativeName>
</protein>
<dbReference type="EC" id="3.6.4.13"/>
<dbReference type="EMBL" id="DS027056">
    <property type="protein sequence ID" value="EAW09409.1"/>
    <property type="molecule type" value="Genomic_DNA"/>
</dbReference>
<dbReference type="RefSeq" id="XP_001270835.1">
    <property type="nucleotide sequence ID" value="XM_001270834.1"/>
</dbReference>
<dbReference type="SMR" id="A1CJT5"/>
<dbReference type="STRING" id="344612.A1CJT5"/>
<dbReference type="EnsemblFungi" id="EAW09409">
    <property type="protein sequence ID" value="EAW09409"/>
    <property type="gene ID" value="ACLA_036120"/>
</dbReference>
<dbReference type="GeneID" id="4703229"/>
<dbReference type="KEGG" id="act:ACLA_036120"/>
<dbReference type="VEuPathDB" id="FungiDB:ACLA_036120"/>
<dbReference type="eggNOG" id="KOG0327">
    <property type="taxonomic scope" value="Eukaryota"/>
</dbReference>
<dbReference type="HOGENOM" id="CLU_003041_1_0_1"/>
<dbReference type="OMA" id="FGCQALV"/>
<dbReference type="OrthoDB" id="10265785at2759"/>
<dbReference type="Proteomes" id="UP000006701">
    <property type="component" value="Unassembled WGS sequence"/>
</dbReference>
<dbReference type="GO" id="GO:0005737">
    <property type="term" value="C:cytoplasm"/>
    <property type="evidence" value="ECO:0007669"/>
    <property type="project" value="UniProtKB-SubCell"/>
</dbReference>
<dbReference type="GO" id="GO:0005524">
    <property type="term" value="F:ATP binding"/>
    <property type="evidence" value="ECO:0007669"/>
    <property type="project" value="UniProtKB-KW"/>
</dbReference>
<dbReference type="GO" id="GO:0016887">
    <property type="term" value="F:ATP hydrolysis activity"/>
    <property type="evidence" value="ECO:0007669"/>
    <property type="project" value="RHEA"/>
</dbReference>
<dbReference type="GO" id="GO:0003723">
    <property type="term" value="F:RNA binding"/>
    <property type="evidence" value="ECO:0007669"/>
    <property type="project" value="UniProtKB-KW"/>
</dbReference>
<dbReference type="GO" id="GO:0003724">
    <property type="term" value="F:RNA helicase activity"/>
    <property type="evidence" value="ECO:0007669"/>
    <property type="project" value="UniProtKB-EC"/>
</dbReference>
<dbReference type="GO" id="GO:0003743">
    <property type="term" value="F:translation initiation factor activity"/>
    <property type="evidence" value="ECO:0007669"/>
    <property type="project" value="UniProtKB-KW"/>
</dbReference>
<dbReference type="GO" id="GO:0002183">
    <property type="term" value="P:cytoplasmic translational initiation"/>
    <property type="evidence" value="ECO:0007669"/>
    <property type="project" value="EnsemblFungi"/>
</dbReference>
<dbReference type="CDD" id="cd18046">
    <property type="entry name" value="DEADc_EIF4AII_EIF4AI_DDX2"/>
    <property type="match status" value="1"/>
</dbReference>
<dbReference type="CDD" id="cd18787">
    <property type="entry name" value="SF2_C_DEAD"/>
    <property type="match status" value="1"/>
</dbReference>
<dbReference type="FunFam" id="3.40.50.300:FF:000089">
    <property type="entry name" value="Eukaryotic initiation factor 4A-II"/>
    <property type="match status" value="1"/>
</dbReference>
<dbReference type="FunFam" id="3.40.50.300:FF:000031">
    <property type="entry name" value="Eukaryotic initiation factor 4A-III"/>
    <property type="match status" value="1"/>
</dbReference>
<dbReference type="Gene3D" id="3.40.50.300">
    <property type="entry name" value="P-loop containing nucleotide triphosphate hydrolases"/>
    <property type="match status" value="2"/>
</dbReference>
<dbReference type="InterPro" id="IPR011545">
    <property type="entry name" value="DEAD/DEAH_box_helicase_dom"/>
</dbReference>
<dbReference type="InterPro" id="IPR044728">
    <property type="entry name" value="EIF4A_DEADc"/>
</dbReference>
<dbReference type="InterPro" id="IPR014001">
    <property type="entry name" value="Helicase_ATP-bd"/>
</dbReference>
<dbReference type="InterPro" id="IPR001650">
    <property type="entry name" value="Helicase_C-like"/>
</dbReference>
<dbReference type="InterPro" id="IPR027417">
    <property type="entry name" value="P-loop_NTPase"/>
</dbReference>
<dbReference type="InterPro" id="IPR000629">
    <property type="entry name" value="RNA-helicase_DEAD-box_CS"/>
</dbReference>
<dbReference type="InterPro" id="IPR014014">
    <property type="entry name" value="RNA_helicase_DEAD_Q_motif"/>
</dbReference>
<dbReference type="PANTHER" id="PTHR47958">
    <property type="entry name" value="ATP-DEPENDENT RNA HELICASE DBP3"/>
    <property type="match status" value="1"/>
</dbReference>
<dbReference type="Pfam" id="PF00270">
    <property type="entry name" value="DEAD"/>
    <property type="match status" value="1"/>
</dbReference>
<dbReference type="Pfam" id="PF00271">
    <property type="entry name" value="Helicase_C"/>
    <property type="match status" value="1"/>
</dbReference>
<dbReference type="SMART" id="SM00487">
    <property type="entry name" value="DEXDc"/>
    <property type="match status" value="1"/>
</dbReference>
<dbReference type="SMART" id="SM00490">
    <property type="entry name" value="HELICc"/>
    <property type="match status" value="1"/>
</dbReference>
<dbReference type="SUPFAM" id="SSF52540">
    <property type="entry name" value="P-loop containing nucleoside triphosphate hydrolases"/>
    <property type="match status" value="1"/>
</dbReference>
<dbReference type="PROSITE" id="PS00039">
    <property type="entry name" value="DEAD_ATP_HELICASE"/>
    <property type="match status" value="1"/>
</dbReference>
<dbReference type="PROSITE" id="PS51192">
    <property type="entry name" value="HELICASE_ATP_BIND_1"/>
    <property type="match status" value="1"/>
</dbReference>
<dbReference type="PROSITE" id="PS51194">
    <property type="entry name" value="HELICASE_CTER"/>
    <property type="match status" value="1"/>
</dbReference>
<dbReference type="PROSITE" id="PS51195">
    <property type="entry name" value="Q_MOTIF"/>
    <property type="match status" value="1"/>
</dbReference>
<name>IF4A_ASPCL</name>
<gene>
    <name type="primary">tif1</name>
    <name type="synonym">tif41</name>
    <name type="ORF">ACLA_036120</name>
</gene>
<reference key="1">
    <citation type="journal article" date="2008" name="PLoS Genet.">
        <title>Genomic islands in the pathogenic filamentous fungus Aspergillus fumigatus.</title>
        <authorList>
            <person name="Fedorova N.D."/>
            <person name="Khaldi N."/>
            <person name="Joardar V.S."/>
            <person name="Maiti R."/>
            <person name="Amedeo P."/>
            <person name="Anderson M.J."/>
            <person name="Crabtree J."/>
            <person name="Silva J.C."/>
            <person name="Badger J.H."/>
            <person name="Albarraq A."/>
            <person name="Angiuoli S."/>
            <person name="Bussey H."/>
            <person name="Bowyer P."/>
            <person name="Cotty P.J."/>
            <person name="Dyer P.S."/>
            <person name="Egan A."/>
            <person name="Galens K."/>
            <person name="Fraser-Liggett C.M."/>
            <person name="Haas B.J."/>
            <person name="Inman J.M."/>
            <person name="Kent R."/>
            <person name="Lemieux S."/>
            <person name="Malavazi I."/>
            <person name="Orvis J."/>
            <person name="Roemer T."/>
            <person name="Ronning C.M."/>
            <person name="Sundaram J.P."/>
            <person name="Sutton G."/>
            <person name="Turner G."/>
            <person name="Venter J.C."/>
            <person name="White O.R."/>
            <person name="Whitty B.R."/>
            <person name="Youngman P."/>
            <person name="Wolfe K.H."/>
            <person name="Goldman G.H."/>
            <person name="Wortman J.R."/>
            <person name="Jiang B."/>
            <person name="Denning D.W."/>
            <person name="Nierman W.C."/>
        </authorList>
    </citation>
    <scope>NUCLEOTIDE SEQUENCE [LARGE SCALE GENOMIC DNA]</scope>
    <source>
        <strain>ATCC 1007 / CBS 513.65 / DSM 816 / NCTC 3887 / NRRL 1 / QM 1276 / 107</strain>
    </source>
</reference>
<accession>A1CJT5</accession>